<reference key="1">
    <citation type="submission" date="2009-01" db="EMBL/GenBank/DDBJ databases">
        <title>Complete sequence of chromosome of Methylobacterium nodulans ORS 2060.</title>
        <authorList>
            <consortium name="US DOE Joint Genome Institute"/>
            <person name="Lucas S."/>
            <person name="Copeland A."/>
            <person name="Lapidus A."/>
            <person name="Glavina del Rio T."/>
            <person name="Dalin E."/>
            <person name="Tice H."/>
            <person name="Bruce D."/>
            <person name="Goodwin L."/>
            <person name="Pitluck S."/>
            <person name="Sims D."/>
            <person name="Brettin T."/>
            <person name="Detter J.C."/>
            <person name="Han C."/>
            <person name="Larimer F."/>
            <person name="Land M."/>
            <person name="Hauser L."/>
            <person name="Kyrpides N."/>
            <person name="Ivanova N."/>
            <person name="Marx C.J."/>
            <person name="Richardson P."/>
        </authorList>
    </citation>
    <scope>NUCLEOTIDE SEQUENCE [LARGE SCALE GENOMIC DNA]</scope>
    <source>
        <strain>LMG 21967 / CNCM I-2342 / ORS 2060</strain>
    </source>
</reference>
<keyword id="KW-1185">Reference proteome</keyword>
<keyword id="KW-0687">Ribonucleoprotein</keyword>
<keyword id="KW-0689">Ribosomal protein</keyword>
<keyword id="KW-0694">RNA-binding</keyword>
<keyword id="KW-0699">rRNA-binding</keyword>
<keyword id="KW-0820">tRNA-binding</keyword>
<evidence type="ECO:0000255" key="1">
    <source>
        <dbReference type="HAMAP-Rule" id="MF_01315"/>
    </source>
</evidence>
<evidence type="ECO:0000256" key="2">
    <source>
        <dbReference type="SAM" id="MobiDB-lite"/>
    </source>
</evidence>
<evidence type="ECO:0000305" key="3"/>
<gene>
    <name evidence="1" type="primary">rpsM</name>
    <name type="ordered locus">Mnod_1930</name>
</gene>
<comment type="function">
    <text evidence="1">Located at the top of the head of the 30S subunit, it contacts several helices of the 16S rRNA. In the 70S ribosome it contacts the 23S rRNA (bridge B1a) and protein L5 of the 50S subunit (bridge B1b), connecting the 2 subunits; these bridges are implicated in subunit movement. Contacts the tRNAs in the A and P-sites.</text>
</comment>
<comment type="subunit">
    <text evidence="1">Part of the 30S ribosomal subunit. Forms a loose heterodimer with protein S19. Forms two bridges to the 50S subunit in the 70S ribosome.</text>
</comment>
<comment type="similarity">
    <text evidence="1">Belongs to the universal ribosomal protein uS13 family.</text>
</comment>
<proteinExistence type="inferred from homology"/>
<feature type="chain" id="PRO_1000165627" description="Small ribosomal subunit protein uS13">
    <location>
        <begin position="1"/>
        <end position="122"/>
    </location>
</feature>
<feature type="region of interest" description="Disordered" evidence="2">
    <location>
        <begin position="95"/>
        <end position="122"/>
    </location>
</feature>
<protein>
    <recommendedName>
        <fullName evidence="1">Small ribosomal subunit protein uS13</fullName>
    </recommendedName>
    <alternativeName>
        <fullName evidence="3">30S ribosomal protein S13</fullName>
    </alternativeName>
</protein>
<name>RS13_METNO</name>
<dbReference type="EMBL" id="CP001349">
    <property type="protein sequence ID" value="ACL56919.1"/>
    <property type="molecule type" value="Genomic_DNA"/>
</dbReference>
<dbReference type="RefSeq" id="WP_015928608.1">
    <property type="nucleotide sequence ID" value="NC_011894.1"/>
</dbReference>
<dbReference type="SMR" id="B8IT33"/>
<dbReference type="STRING" id="460265.Mnod_1930"/>
<dbReference type="KEGG" id="mno:Mnod_1930"/>
<dbReference type="eggNOG" id="COG0099">
    <property type="taxonomic scope" value="Bacteria"/>
</dbReference>
<dbReference type="HOGENOM" id="CLU_103849_1_2_5"/>
<dbReference type="OrthoDB" id="9803610at2"/>
<dbReference type="Proteomes" id="UP000008207">
    <property type="component" value="Chromosome"/>
</dbReference>
<dbReference type="GO" id="GO:0005829">
    <property type="term" value="C:cytosol"/>
    <property type="evidence" value="ECO:0007669"/>
    <property type="project" value="TreeGrafter"/>
</dbReference>
<dbReference type="GO" id="GO:0015935">
    <property type="term" value="C:small ribosomal subunit"/>
    <property type="evidence" value="ECO:0007669"/>
    <property type="project" value="TreeGrafter"/>
</dbReference>
<dbReference type="GO" id="GO:0019843">
    <property type="term" value="F:rRNA binding"/>
    <property type="evidence" value="ECO:0007669"/>
    <property type="project" value="UniProtKB-UniRule"/>
</dbReference>
<dbReference type="GO" id="GO:0003735">
    <property type="term" value="F:structural constituent of ribosome"/>
    <property type="evidence" value="ECO:0007669"/>
    <property type="project" value="InterPro"/>
</dbReference>
<dbReference type="GO" id="GO:0000049">
    <property type="term" value="F:tRNA binding"/>
    <property type="evidence" value="ECO:0007669"/>
    <property type="project" value="UniProtKB-UniRule"/>
</dbReference>
<dbReference type="GO" id="GO:0006412">
    <property type="term" value="P:translation"/>
    <property type="evidence" value="ECO:0007669"/>
    <property type="project" value="UniProtKB-UniRule"/>
</dbReference>
<dbReference type="FunFam" id="1.10.8.50:FF:000001">
    <property type="entry name" value="30S ribosomal protein S13"/>
    <property type="match status" value="1"/>
</dbReference>
<dbReference type="FunFam" id="4.10.910.10:FF:000001">
    <property type="entry name" value="30S ribosomal protein S13"/>
    <property type="match status" value="1"/>
</dbReference>
<dbReference type="Gene3D" id="1.10.8.50">
    <property type="match status" value="1"/>
</dbReference>
<dbReference type="Gene3D" id="4.10.910.10">
    <property type="entry name" value="30s ribosomal protein s13, domain 2"/>
    <property type="match status" value="1"/>
</dbReference>
<dbReference type="HAMAP" id="MF_01315">
    <property type="entry name" value="Ribosomal_uS13"/>
    <property type="match status" value="1"/>
</dbReference>
<dbReference type="InterPro" id="IPR027437">
    <property type="entry name" value="Rbsml_uS13_C"/>
</dbReference>
<dbReference type="InterPro" id="IPR001892">
    <property type="entry name" value="Ribosomal_uS13"/>
</dbReference>
<dbReference type="InterPro" id="IPR010979">
    <property type="entry name" value="Ribosomal_uS13-like_H2TH"/>
</dbReference>
<dbReference type="InterPro" id="IPR019980">
    <property type="entry name" value="Ribosomal_uS13_bac-type"/>
</dbReference>
<dbReference type="InterPro" id="IPR018269">
    <property type="entry name" value="Ribosomal_uS13_CS"/>
</dbReference>
<dbReference type="NCBIfam" id="TIGR03631">
    <property type="entry name" value="uS13_bact"/>
    <property type="match status" value="1"/>
</dbReference>
<dbReference type="PANTHER" id="PTHR10871">
    <property type="entry name" value="30S RIBOSOMAL PROTEIN S13/40S RIBOSOMAL PROTEIN S18"/>
    <property type="match status" value="1"/>
</dbReference>
<dbReference type="PANTHER" id="PTHR10871:SF1">
    <property type="entry name" value="SMALL RIBOSOMAL SUBUNIT PROTEIN US13M"/>
    <property type="match status" value="1"/>
</dbReference>
<dbReference type="Pfam" id="PF00416">
    <property type="entry name" value="Ribosomal_S13"/>
    <property type="match status" value="1"/>
</dbReference>
<dbReference type="PIRSF" id="PIRSF002134">
    <property type="entry name" value="Ribosomal_S13"/>
    <property type="match status" value="1"/>
</dbReference>
<dbReference type="SUPFAM" id="SSF46946">
    <property type="entry name" value="S13-like H2TH domain"/>
    <property type="match status" value="1"/>
</dbReference>
<dbReference type="PROSITE" id="PS00646">
    <property type="entry name" value="RIBOSOMAL_S13_1"/>
    <property type="match status" value="1"/>
</dbReference>
<dbReference type="PROSITE" id="PS50159">
    <property type="entry name" value="RIBOSOMAL_S13_2"/>
    <property type="match status" value="1"/>
</dbReference>
<accession>B8IT33</accession>
<organism>
    <name type="scientific">Methylobacterium nodulans (strain LMG 21967 / CNCM I-2342 / ORS 2060)</name>
    <dbReference type="NCBI Taxonomy" id="460265"/>
    <lineage>
        <taxon>Bacteria</taxon>
        <taxon>Pseudomonadati</taxon>
        <taxon>Pseudomonadota</taxon>
        <taxon>Alphaproteobacteria</taxon>
        <taxon>Hyphomicrobiales</taxon>
        <taxon>Methylobacteriaceae</taxon>
        <taxon>Methylobacterium</taxon>
    </lineage>
</organism>
<sequence length="122" mass="13886">MARIAGVNIPTNKRVVIALQYIHGIGPKKAEEITEKVGIPAERRVNQLTDAEVLQIREAIDRDYIVEGDLRREVAMNIKRLMDLGCYRGLRHRRNLPVRGQRTHTNARTRKGKAKPIAGKKK</sequence>